<organism>
    <name type="scientific">Aquifex aeolicus (strain VF5)</name>
    <dbReference type="NCBI Taxonomy" id="224324"/>
    <lineage>
        <taxon>Bacteria</taxon>
        <taxon>Pseudomonadati</taxon>
        <taxon>Aquificota</taxon>
        <taxon>Aquificia</taxon>
        <taxon>Aquificales</taxon>
        <taxon>Aquificaceae</taxon>
        <taxon>Aquifex</taxon>
    </lineage>
</organism>
<proteinExistence type="predicted"/>
<sequence length="210" mass="23685">MNRRELLIAGLSFPFLKFAFAENKFINPKTVNPRLNVAYATAKLLAKNGFNEVGVVFMEDSQLCAVFAGALVTGLRILGKKAWYIEGGKDLIPSLKKYNPKALYMAYFGELPDEQVQEALNNDLKQLAKYGKPFKLIFHVSTLQRGYVGNAILEEDIFNYLNKVKELYAMKVIEGYVHLAKVSELSEFGVSFGKDVDKIKLIKFEEVGKK</sequence>
<feature type="chain" id="PRO_0000186953" description="Uncharacterized protein aq_1850">
    <location>
        <begin position="1"/>
        <end position="210"/>
    </location>
</feature>
<protein>
    <recommendedName>
        <fullName>Uncharacterized protein aq_1850</fullName>
    </recommendedName>
</protein>
<keyword id="KW-1185">Reference proteome</keyword>
<accession>O67702</accession>
<name>Y1850_AQUAE</name>
<dbReference type="EMBL" id="AE000657">
    <property type="protein sequence ID" value="AAC07669.1"/>
    <property type="molecule type" value="Genomic_DNA"/>
</dbReference>
<dbReference type="PIR" id="D70459">
    <property type="entry name" value="D70459"/>
</dbReference>
<dbReference type="RefSeq" id="NP_214270.1">
    <property type="nucleotide sequence ID" value="NC_000918.1"/>
</dbReference>
<dbReference type="RefSeq" id="WP_010881206.1">
    <property type="nucleotide sequence ID" value="NC_000918.1"/>
</dbReference>
<dbReference type="STRING" id="224324.aq_1850"/>
<dbReference type="EnsemblBacteria" id="AAC07669">
    <property type="protein sequence ID" value="AAC07669"/>
    <property type="gene ID" value="aq_1850"/>
</dbReference>
<dbReference type="KEGG" id="aae:aq_1850"/>
<dbReference type="HOGENOM" id="CLU_1308017_0_0_0"/>
<dbReference type="InParanoid" id="O67702"/>
<dbReference type="OrthoDB" id="14468at2"/>
<dbReference type="Proteomes" id="UP000000798">
    <property type="component" value="Chromosome"/>
</dbReference>
<gene>
    <name type="ordered locus">aq_1850</name>
</gene>
<reference key="1">
    <citation type="journal article" date="1998" name="Nature">
        <title>The complete genome of the hyperthermophilic bacterium Aquifex aeolicus.</title>
        <authorList>
            <person name="Deckert G."/>
            <person name="Warren P.V."/>
            <person name="Gaasterland T."/>
            <person name="Young W.G."/>
            <person name="Lenox A.L."/>
            <person name="Graham D.E."/>
            <person name="Overbeek R."/>
            <person name="Snead M.A."/>
            <person name="Keller M."/>
            <person name="Aujay M."/>
            <person name="Huber R."/>
            <person name="Feldman R.A."/>
            <person name="Short J.M."/>
            <person name="Olsen G.J."/>
            <person name="Swanson R.V."/>
        </authorList>
    </citation>
    <scope>NUCLEOTIDE SEQUENCE [LARGE SCALE GENOMIC DNA]</scope>
    <source>
        <strain>VF5</strain>
    </source>
</reference>